<comment type="function">
    <text evidence="1">Mitochondrial GTPase that mediates the disassembly of ribosomes from messenger RNA at the termination of mitochondrial protein biosynthesis. Not involved in the GTP-dependent ribosomal translocation step during translation elongation.</text>
</comment>
<comment type="subcellular location">
    <subcellularLocation>
        <location evidence="1">Mitochondrion</location>
    </subcellularLocation>
</comment>
<comment type="similarity">
    <text evidence="1">Belongs to the TRAFAC class translation factor GTPase superfamily. Classic translation factor GTPase family. EF-G/EF-2 subfamily.</text>
</comment>
<organism>
    <name type="scientific">Culex quinquefasciatus</name>
    <name type="common">Southern house mosquito</name>
    <name type="synonym">Culex pungens</name>
    <dbReference type="NCBI Taxonomy" id="7176"/>
    <lineage>
        <taxon>Eukaryota</taxon>
        <taxon>Metazoa</taxon>
        <taxon>Ecdysozoa</taxon>
        <taxon>Arthropoda</taxon>
        <taxon>Hexapoda</taxon>
        <taxon>Insecta</taxon>
        <taxon>Pterygota</taxon>
        <taxon>Neoptera</taxon>
        <taxon>Endopterygota</taxon>
        <taxon>Diptera</taxon>
        <taxon>Nematocera</taxon>
        <taxon>Culicoidea</taxon>
        <taxon>Culicidae</taxon>
        <taxon>Culicinae</taxon>
        <taxon>Culicini</taxon>
        <taxon>Culex</taxon>
        <taxon>Culex</taxon>
    </lineage>
</organism>
<dbReference type="EMBL" id="DS231816">
    <property type="protein sequence ID" value="EDS37582.1"/>
    <property type="molecule type" value="Genomic_DNA"/>
</dbReference>
<dbReference type="RefSeq" id="XP_001842044.1">
    <property type="nucleotide sequence ID" value="XM_001841992.1"/>
</dbReference>
<dbReference type="SMR" id="B0W010"/>
<dbReference type="FunCoup" id="B0W010">
    <property type="interactions" value="463"/>
</dbReference>
<dbReference type="STRING" id="7176.B0W010"/>
<dbReference type="EnsemblMetazoa" id="CPIJ000374-RA">
    <property type="protein sequence ID" value="CPIJ000374-PA"/>
    <property type="gene ID" value="CPIJ000374"/>
</dbReference>
<dbReference type="KEGG" id="cqu:CpipJ_CPIJ000374"/>
<dbReference type="CTD" id="42670"/>
<dbReference type="VEuPathDB" id="VectorBase:CPIJ000374"/>
<dbReference type="VEuPathDB" id="VectorBase:CQUJHB011191"/>
<dbReference type="eggNOG" id="KOG0464">
    <property type="taxonomic scope" value="Eukaryota"/>
</dbReference>
<dbReference type="HOGENOM" id="CLU_002794_4_1_1"/>
<dbReference type="InParanoid" id="B0W010"/>
<dbReference type="OMA" id="GPQFTFP"/>
<dbReference type="OrthoDB" id="198619at2759"/>
<dbReference type="PhylomeDB" id="B0W010"/>
<dbReference type="Proteomes" id="UP000002320">
    <property type="component" value="Unassembled WGS sequence"/>
</dbReference>
<dbReference type="GO" id="GO:0005739">
    <property type="term" value="C:mitochondrion"/>
    <property type="evidence" value="ECO:0007669"/>
    <property type="project" value="UniProtKB-SubCell"/>
</dbReference>
<dbReference type="GO" id="GO:0005525">
    <property type="term" value="F:GTP binding"/>
    <property type="evidence" value="ECO:0007669"/>
    <property type="project" value="UniProtKB-UniRule"/>
</dbReference>
<dbReference type="GO" id="GO:0003924">
    <property type="term" value="F:GTPase activity"/>
    <property type="evidence" value="ECO:0000250"/>
    <property type="project" value="UniProtKB"/>
</dbReference>
<dbReference type="GO" id="GO:0032543">
    <property type="term" value="P:mitochondrial translation"/>
    <property type="evidence" value="ECO:0000250"/>
    <property type="project" value="UniProtKB"/>
</dbReference>
<dbReference type="GO" id="GO:0032790">
    <property type="term" value="P:ribosome disassembly"/>
    <property type="evidence" value="ECO:0000250"/>
    <property type="project" value="UniProtKB"/>
</dbReference>
<dbReference type="CDD" id="cd16262">
    <property type="entry name" value="EFG_III"/>
    <property type="match status" value="1"/>
</dbReference>
<dbReference type="CDD" id="cd03713">
    <property type="entry name" value="EFG_mtEFG_C"/>
    <property type="match status" value="1"/>
</dbReference>
<dbReference type="FunFam" id="3.30.70.240:FF:000001">
    <property type="entry name" value="Elongation factor G"/>
    <property type="match status" value="1"/>
</dbReference>
<dbReference type="FunFam" id="2.40.30.10:FF:000286">
    <property type="entry name" value="Ribosome-releasing factor 2, mitochondrial"/>
    <property type="match status" value="1"/>
</dbReference>
<dbReference type="FunFam" id="3.30.230.10:FF:000033">
    <property type="entry name" value="Ribosome-releasing factor 2, mitochondrial"/>
    <property type="match status" value="1"/>
</dbReference>
<dbReference type="FunFam" id="3.30.70.870:FF:000005">
    <property type="entry name" value="Ribosome-releasing factor 2, mitochondrial"/>
    <property type="match status" value="1"/>
</dbReference>
<dbReference type="FunFam" id="3.40.50.300:FF:000514">
    <property type="entry name" value="Ribosome-releasing factor 2, mitochondrial"/>
    <property type="match status" value="1"/>
</dbReference>
<dbReference type="Gene3D" id="3.30.230.10">
    <property type="match status" value="1"/>
</dbReference>
<dbReference type="Gene3D" id="3.30.70.240">
    <property type="match status" value="1"/>
</dbReference>
<dbReference type="Gene3D" id="3.30.70.870">
    <property type="entry name" value="Elongation Factor G (Translational Gtpase), domain 3"/>
    <property type="match status" value="1"/>
</dbReference>
<dbReference type="Gene3D" id="3.40.50.300">
    <property type="entry name" value="P-loop containing nucleotide triphosphate hydrolases"/>
    <property type="match status" value="1"/>
</dbReference>
<dbReference type="Gene3D" id="2.40.30.10">
    <property type="entry name" value="Translation factors"/>
    <property type="match status" value="1"/>
</dbReference>
<dbReference type="HAMAP" id="MF_03059">
    <property type="entry name" value="mEF_G_2"/>
    <property type="match status" value="1"/>
</dbReference>
<dbReference type="InterPro" id="IPR053905">
    <property type="entry name" value="EF-G-like_DII"/>
</dbReference>
<dbReference type="InterPro" id="IPR030851">
    <property type="entry name" value="EFG2"/>
</dbReference>
<dbReference type="InterPro" id="IPR041095">
    <property type="entry name" value="EFG_II"/>
</dbReference>
<dbReference type="InterPro" id="IPR009022">
    <property type="entry name" value="EFG_III"/>
</dbReference>
<dbReference type="InterPro" id="IPR035647">
    <property type="entry name" value="EFG_III/V"/>
</dbReference>
<dbReference type="InterPro" id="IPR035649">
    <property type="entry name" value="EFG_V"/>
</dbReference>
<dbReference type="InterPro" id="IPR000640">
    <property type="entry name" value="EFG_V-like"/>
</dbReference>
<dbReference type="InterPro" id="IPR031157">
    <property type="entry name" value="G_TR_CS"/>
</dbReference>
<dbReference type="InterPro" id="IPR027417">
    <property type="entry name" value="P-loop_NTPase"/>
</dbReference>
<dbReference type="InterPro" id="IPR020568">
    <property type="entry name" value="Ribosomal_Su5_D2-typ_SF"/>
</dbReference>
<dbReference type="InterPro" id="IPR014721">
    <property type="entry name" value="Ribsml_uS5_D2-typ_fold_subgr"/>
</dbReference>
<dbReference type="InterPro" id="IPR005225">
    <property type="entry name" value="Small_GTP-bd"/>
</dbReference>
<dbReference type="InterPro" id="IPR000795">
    <property type="entry name" value="T_Tr_GTP-bd_dom"/>
</dbReference>
<dbReference type="InterPro" id="IPR009000">
    <property type="entry name" value="Transl_B-barrel_sf"/>
</dbReference>
<dbReference type="InterPro" id="IPR005517">
    <property type="entry name" value="Transl_elong_EFG/EF2_IV"/>
</dbReference>
<dbReference type="NCBIfam" id="TIGR00231">
    <property type="entry name" value="small_GTP"/>
    <property type="match status" value="1"/>
</dbReference>
<dbReference type="PANTHER" id="PTHR43261:SF1">
    <property type="entry name" value="RIBOSOME-RELEASING FACTOR 2, MITOCHONDRIAL"/>
    <property type="match status" value="1"/>
</dbReference>
<dbReference type="PANTHER" id="PTHR43261">
    <property type="entry name" value="TRANSLATION ELONGATION FACTOR G-RELATED"/>
    <property type="match status" value="1"/>
</dbReference>
<dbReference type="Pfam" id="PF22042">
    <property type="entry name" value="EF-G_D2"/>
    <property type="match status" value="1"/>
</dbReference>
<dbReference type="Pfam" id="PF00679">
    <property type="entry name" value="EFG_C"/>
    <property type="match status" value="1"/>
</dbReference>
<dbReference type="Pfam" id="PF14492">
    <property type="entry name" value="EFG_III"/>
    <property type="match status" value="1"/>
</dbReference>
<dbReference type="Pfam" id="PF00009">
    <property type="entry name" value="GTP_EFTU"/>
    <property type="match status" value="1"/>
</dbReference>
<dbReference type="PRINTS" id="PR00315">
    <property type="entry name" value="ELONGATNFCT"/>
</dbReference>
<dbReference type="SMART" id="SM00838">
    <property type="entry name" value="EFG_C"/>
    <property type="match status" value="1"/>
</dbReference>
<dbReference type="SMART" id="SM00889">
    <property type="entry name" value="EFG_IV"/>
    <property type="match status" value="1"/>
</dbReference>
<dbReference type="SUPFAM" id="SSF54980">
    <property type="entry name" value="EF-G C-terminal domain-like"/>
    <property type="match status" value="2"/>
</dbReference>
<dbReference type="SUPFAM" id="SSF52540">
    <property type="entry name" value="P-loop containing nucleoside triphosphate hydrolases"/>
    <property type="match status" value="1"/>
</dbReference>
<dbReference type="SUPFAM" id="SSF54211">
    <property type="entry name" value="Ribosomal protein S5 domain 2-like"/>
    <property type="match status" value="1"/>
</dbReference>
<dbReference type="SUPFAM" id="SSF50447">
    <property type="entry name" value="Translation proteins"/>
    <property type="match status" value="1"/>
</dbReference>
<dbReference type="PROSITE" id="PS00301">
    <property type="entry name" value="G_TR_1"/>
    <property type="match status" value="1"/>
</dbReference>
<dbReference type="PROSITE" id="PS51722">
    <property type="entry name" value="G_TR_2"/>
    <property type="match status" value="1"/>
</dbReference>
<reference key="1">
    <citation type="submission" date="2007-03" db="EMBL/GenBank/DDBJ databases">
        <title>Annotation of Culex pipiens quinquefasciatus.</title>
        <authorList>
            <consortium name="The Broad Institute Genome Sequencing Platform"/>
            <person name="Atkinson P.W."/>
            <person name="Hemingway J."/>
            <person name="Christensen B.M."/>
            <person name="Higgs S."/>
            <person name="Kodira C.D."/>
            <person name="Hannick L.I."/>
            <person name="Megy K."/>
            <person name="O'Leary S.B."/>
            <person name="Pearson M."/>
            <person name="Haas B.J."/>
            <person name="Mauceli E."/>
            <person name="Wortman J.R."/>
            <person name="Lee N.H."/>
            <person name="Guigo R."/>
            <person name="Stanke M."/>
            <person name="Alvarado L."/>
            <person name="Amedeo P."/>
            <person name="Antoine C.H."/>
            <person name="Arensburger P."/>
            <person name="Bidwell S.L."/>
            <person name="Crawford M."/>
            <person name="Camaro F."/>
            <person name="Devon K."/>
            <person name="Engels R."/>
            <person name="Hammond M."/>
            <person name="Howarth C."/>
            <person name="Koehrsen M."/>
            <person name="Lawson D."/>
            <person name="Montgomery P."/>
            <person name="Nene V."/>
            <person name="Nusbaum C."/>
            <person name="Puiu D."/>
            <person name="Romero-Severson J."/>
            <person name="Severson D.W."/>
            <person name="Shumway M."/>
            <person name="Sisk P."/>
            <person name="Stolte C."/>
            <person name="Zeng Q."/>
            <person name="Eisenstadt E."/>
            <person name="Fraser-Liggett C.M."/>
            <person name="Strausberg R."/>
            <person name="Galagan J."/>
            <person name="Birren B."/>
            <person name="Collins F.H."/>
        </authorList>
    </citation>
    <scope>NUCLEOTIDE SEQUENCE [LARGE SCALE GENOMIC DNA]</scope>
    <source>
        <strain>JHB</strain>
    </source>
</reference>
<sequence>MLLLLCNRSVVPRGIRRILRTAATVTSLRWNHTGPSASETLLEKNIRNIGILAHIDGGKTTTTERMLFYAGKTNVLGEVHHGNTVTDFLVQERERGITICSAAVSFDWRDHRVNLLDTPGHIDFTMEVEQSLAAVDGTVVILDGSAGVEAQTVTVWSQADRHRLPRLVFVNKMDKESADFEGCLEELEKKLGVVAVPLQMPVIKEGKLTGVVDVLSGAQVVWDKQNHGRTYKAIPLVDQQLVEAQDKLYQIIDVLSGMDDGLAQVIIESDSMDNVKPELVASAIRACTMKQQIVPVFLGSAYKNIGVQLLMDAVLKYLPAPNERNEIYNCFGSDFVGKISKVTHDKQRGPLSLVRVFRGTLKKGAKIITAKGTSETIQRIYAPWADEYREISSISAGNVGLCAGPKSTVTGDLVVANASVLRNALKKLSPTNDGVEEDDINELLASKLSFHTVVPDAVYFCSIEPPSSSYQAALDAALREIQREDPSLRVSYDETTMQTVLGGMGKLHLEIIKSRILSEYKIDVDLGPLQIAYKETLEEPARGSWTAEKEIAGSKQLVRMEVTVHAKRKDERFLLDSSPEAQENLRMIRPRQMSYVRKGSLAALERGPKLGGQLMDVAVTLHQLTIGKGTADTFIMAATAQCVRHVLSSAKCRLMEPIMLLEMVMPAEHLNPILADLGKRRCEILDVTARGQQHKVLRANAPLAELEDYSSEVRCISSGTASVSMEPNGYALLSEMDEASAIRRAHGLE</sequence>
<protein>
    <recommendedName>
        <fullName evidence="1">Ribosome-releasing factor 2, mitochondrial</fullName>
        <shortName evidence="1">RRF2mt</shortName>
    </recommendedName>
    <alternativeName>
        <fullName evidence="1">Elongation factor G 2, mitochondrial</fullName>
        <shortName evidence="1">EF-G2mt</shortName>
        <shortName evidence="1">mEF-G 2</shortName>
    </alternativeName>
</protein>
<name>RRF2M_CULQU</name>
<evidence type="ECO:0000255" key="1">
    <source>
        <dbReference type="HAMAP-Rule" id="MF_03059"/>
    </source>
</evidence>
<proteinExistence type="inferred from homology"/>
<feature type="transit peptide" description="Mitochondrion" evidence="1">
    <location>
        <begin position="1"/>
        <end position="22"/>
    </location>
</feature>
<feature type="chain" id="PRO_0000385597" description="Ribosome-releasing factor 2, mitochondrial">
    <location>
        <begin position="23"/>
        <end position="749"/>
    </location>
</feature>
<feature type="domain" description="tr-type G">
    <location>
        <begin position="44"/>
        <end position="322"/>
    </location>
</feature>
<feature type="binding site" evidence="1">
    <location>
        <begin position="53"/>
        <end position="60"/>
    </location>
    <ligand>
        <name>GTP</name>
        <dbReference type="ChEBI" id="CHEBI:37565"/>
    </ligand>
</feature>
<feature type="binding site" evidence="1">
    <location>
        <begin position="117"/>
        <end position="121"/>
    </location>
    <ligand>
        <name>GTP</name>
        <dbReference type="ChEBI" id="CHEBI:37565"/>
    </ligand>
</feature>
<feature type="binding site" evidence="1">
    <location>
        <begin position="171"/>
        <end position="174"/>
    </location>
    <ligand>
        <name>GTP</name>
        <dbReference type="ChEBI" id="CHEBI:37565"/>
    </ligand>
</feature>
<accession>B0W010</accession>
<keyword id="KW-0342">GTP-binding</keyword>
<keyword id="KW-0496">Mitochondrion</keyword>
<keyword id="KW-0547">Nucleotide-binding</keyword>
<keyword id="KW-0648">Protein biosynthesis</keyword>
<keyword id="KW-1185">Reference proteome</keyword>
<keyword id="KW-0809">Transit peptide</keyword>
<gene>
    <name type="ORF">CPIJ000374</name>
</gene>